<evidence type="ECO:0000255" key="1">
    <source>
        <dbReference type="HAMAP-Rule" id="MF_01183"/>
    </source>
</evidence>
<keyword id="KW-0143">Chaperone</keyword>
<keyword id="KW-0413">Isomerase</keyword>
<keyword id="KW-0574">Periplasm</keyword>
<keyword id="KW-1185">Reference proteome</keyword>
<keyword id="KW-0677">Repeat</keyword>
<keyword id="KW-0697">Rotamase</keyword>
<keyword id="KW-0732">Signal</keyword>
<reference key="1">
    <citation type="journal article" date="2006" name="J. Bacteriol.">
        <title>The genome sequence of the obligately chemolithoautotrophic, facultatively anaerobic bacterium Thiobacillus denitrificans.</title>
        <authorList>
            <person name="Beller H.R."/>
            <person name="Chain P.S."/>
            <person name="Letain T.E."/>
            <person name="Chakicherla A."/>
            <person name="Larimer F.W."/>
            <person name="Richardson P.M."/>
            <person name="Coleman M.A."/>
            <person name="Wood A.P."/>
            <person name="Kelly D.P."/>
        </authorList>
    </citation>
    <scope>NUCLEOTIDE SEQUENCE [LARGE SCALE GENOMIC DNA]</scope>
    <source>
        <strain>ATCC 25259 / T1</strain>
    </source>
</reference>
<accession>Q3SGF9</accession>
<proteinExistence type="inferred from homology"/>
<comment type="function">
    <text evidence="1">Chaperone involved in the correct folding and assembly of outer membrane proteins. Recognizes specific patterns of aromatic residues and the orientation of their side chains, which are found more frequently in integral outer membrane proteins. May act in both early periplasmic and late outer membrane-associated steps of protein maturation.</text>
</comment>
<comment type="catalytic activity">
    <reaction evidence="1">
        <text>[protein]-peptidylproline (omega=180) = [protein]-peptidylproline (omega=0)</text>
        <dbReference type="Rhea" id="RHEA:16237"/>
        <dbReference type="Rhea" id="RHEA-COMP:10747"/>
        <dbReference type="Rhea" id="RHEA-COMP:10748"/>
        <dbReference type="ChEBI" id="CHEBI:83833"/>
        <dbReference type="ChEBI" id="CHEBI:83834"/>
        <dbReference type="EC" id="5.2.1.8"/>
    </reaction>
</comment>
<comment type="subcellular location">
    <subcellularLocation>
        <location evidence="1">Periplasm</location>
    </subcellularLocation>
    <text evidence="1">Is capable of associating with the outer membrane.</text>
</comment>
<comment type="domain">
    <text evidence="1">The PPIase activity resides only in the second parvulin domain. The N-terminal region and the C-terminal tail are necessary and sufficient for the chaperone activity of SurA. The PPIase activity is dispensable for SurA to function as a chaperone. The N-terminal region and the C-terminal tail are also required for porin recognition.</text>
</comment>
<feature type="signal peptide" evidence="1">
    <location>
        <begin position="1"/>
        <end position="30"/>
    </location>
</feature>
<feature type="chain" id="PRO_5000103620" description="Chaperone SurA">
    <location>
        <begin position="31"/>
        <end position="436"/>
    </location>
</feature>
<feature type="domain" description="PpiC 1" evidence="1">
    <location>
        <begin position="180"/>
        <end position="281"/>
    </location>
</feature>
<feature type="domain" description="PpiC 2" evidence="1">
    <location>
        <begin position="291"/>
        <end position="389"/>
    </location>
</feature>
<name>SURA_THIDA</name>
<organism>
    <name type="scientific">Thiobacillus denitrificans (strain ATCC 25259 / T1)</name>
    <dbReference type="NCBI Taxonomy" id="292415"/>
    <lineage>
        <taxon>Bacteria</taxon>
        <taxon>Pseudomonadati</taxon>
        <taxon>Pseudomonadota</taxon>
        <taxon>Betaproteobacteria</taxon>
        <taxon>Nitrosomonadales</taxon>
        <taxon>Thiobacillaceae</taxon>
        <taxon>Thiobacillus</taxon>
    </lineage>
</organism>
<gene>
    <name evidence="1" type="primary">surA</name>
    <name type="ordered locus">Tbd_2338</name>
</gene>
<dbReference type="EC" id="5.2.1.8" evidence="1"/>
<dbReference type="EMBL" id="CP000116">
    <property type="protein sequence ID" value="AAZ98291.1"/>
    <property type="molecule type" value="Genomic_DNA"/>
</dbReference>
<dbReference type="RefSeq" id="WP_011312850.1">
    <property type="nucleotide sequence ID" value="NC_007404.1"/>
</dbReference>
<dbReference type="SMR" id="Q3SGF9"/>
<dbReference type="STRING" id="292415.Tbd_2338"/>
<dbReference type="KEGG" id="tbd:Tbd_2338"/>
<dbReference type="eggNOG" id="COG0760">
    <property type="taxonomic scope" value="Bacteria"/>
</dbReference>
<dbReference type="HOGENOM" id="CLU_034646_11_0_4"/>
<dbReference type="OrthoDB" id="14196at2"/>
<dbReference type="Proteomes" id="UP000008291">
    <property type="component" value="Chromosome"/>
</dbReference>
<dbReference type="GO" id="GO:0030288">
    <property type="term" value="C:outer membrane-bounded periplasmic space"/>
    <property type="evidence" value="ECO:0007669"/>
    <property type="project" value="InterPro"/>
</dbReference>
<dbReference type="GO" id="GO:0042277">
    <property type="term" value="F:peptide binding"/>
    <property type="evidence" value="ECO:0007669"/>
    <property type="project" value="InterPro"/>
</dbReference>
<dbReference type="GO" id="GO:0003755">
    <property type="term" value="F:peptidyl-prolyl cis-trans isomerase activity"/>
    <property type="evidence" value="ECO:0007669"/>
    <property type="project" value="UniProtKB-UniRule"/>
</dbReference>
<dbReference type="GO" id="GO:0051082">
    <property type="term" value="F:unfolded protein binding"/>
    <property type="evidence" value="ECO:0007669"/>
    <property type="project" value="UniProtKB-UniRule"/>
</dbReference>
<dbReference type="GO" id="GO:0043165">
    <property type="term" value="P:Gram-negative-bacterium-type cell outer membrane assembly"/>
    <property type="evidence" value="ECO:0007669"/>
    <property type="project" value="InterPro"/>
</dbReference>
<dbReference type="GO" id="GO:0006457">
    <property type="term" value="P:protein folding"/>
    <property type="evidence" value="ECO:0007669"/>
    <property type="project" value="UniProtKB-UniRule"/>
</dbReference>
<dbReference type="GO" id="GO:0050821">
    <property type="term" value="P:protein stabilization"/>
    <property type="evidence" value="ECO:0007669"/>
    <property type="project" value="InterPro"/>
</dbReference>
<dbReference type="Gene3D" id="3.10.50.40">
    <property type="match status" value="2"/>
</dbReference>
<dbReference type="Gene3D" id="1.10.4030.10">
    <property type="entry name" value="Porin chaperone SurA, peptide-binding domain"/>
    <property type="match status" value="1"/>
</dbReference>
<dbReference type="HAMAP" id="MF_01183">
    <property type="entry name" value="Chaperone_SurA"/>
    <property type="match status" value="1"/>
</dbReference>
<dbReference type="InterPro" id="IPR050280">
    <property type="entry name" value="OMP_Chaperone_SurA"/>
</dbReference>
<dbReference type="InterPro" id="IPR046357">
    <property type="entry name" value="PPIase_dom_sf"/>
</dbReference>
<dbReference type="InterPro" id="IPR000297">
    <property type="entry name" value="PPIase_PpiC"/>
</dbReference>
<dbReference type="InterPro" id="IPR023058">
    <property type="entry name" value="PPIase_PpiC_CS"/>
</dbReference>
<dbReference type="InterPro" id="IPR023034">
    <property type="entry name" value="PPIase_SurA"/>
</dbReference>
<dbReference type="InterPro" id="IPR015391">
    <property type="entry name" value="SurA_N"/>
</dbReference>
<dbReference type="InterPro" id="IPR027304">
    <property type="entry name" value="Trigger_fact/SurA_dom_sf"/>
</dbReference>
<dbReference type="PANTHER" id="PTHR47637">
    <property type="entry name" value="CHAPERONE SURA"/>
    <property type="match status" value="1"/>
</dbReference>
<dbReference type="PANTHER" id="PTHR47637:SF1">
    <property type="entry name" value="CHAPERONE SURA"/>
    <property type="match status" value="1"/>
</dbReference>
<dbReference type="Pfam" id="PF00639">
    <property type="entry name" value="Rotamase"/>
    <property type="match status" value="1"/>
</dbReference>
<dbReference type="Pfam" id="PF13616">
    <property type="entry name" value="Rotamase_3"/>
    <property type="match status" value="1"/>
</dbReference>
<dbReference type="Pfam" id="PF09312">
    <property type="entry name" value="SurA_N"/>
    <property type="match status" value="1"/>
</dbReference>
<dbReference type="SUPFAM" id="SSF54534">
    <property type="entry name" value="FKBP-like"/>
    <property type="match status" value="2"/>
</dbReference>
<dbReference type="SUPFAM" id="SSF109998">
    <property type="entry name" value="Triger factor/SurA peptide-binding domain-like"/>
    <property type="match status" value="1"/>
</dbReference>
<dbReference type="PROSITE" id="PS01096">
    <property type="entry name" value="PPIC_PPIASE_1"/>
    <property type="match status" value="1"/>
</dbReference>
<dbReference type="PROSITE" id="PS50198">
    <property type="entry name" value="PPIC_PPIASE_2"/>
    <property type="match status" value="2"/>
</dbReference>
<sequence>MKFFQRPERRLKQWGLALLLAASALLPARADVVPLNHIVAVVNDEVITRQELAKRYDEVVRNLSRQNTPLPPRNVLEKQLLERMVTELALQQHARNTGVRADPTLVERALQRIAAQNKLDMAGLQAALEKEGQTLDGMRNTIRNELLIARARERDVDNRISVSDAEIDGYLQTQAQQGAETEYNFSHILVSVPENASPEQIRERRARAEDILAQLAAGADFAQLSASHSDAPDALKGGNFGWRASGKLPALFVEALKPMQPGEISPLLRSGNGFHILKLVDKRGLDATLSVTQTHARHILIKTNEITSEADARNRLLQLKERIDNGVKFDELARLHSEDASASKGGDLGWINPGDTVPDFEKAMNALQPGEVSAPVQSPFGWHLIQVLERRDQDVTQERQKLMARQAIRERKAEEAFQDWVRQIRDAAYVELRPID</sequence>
<protein>
    <recommendedName>
        <fullName evidence="1">Chaperone SurA</fullName>
    </recommendedName>
    <alternativeName>
        <fullName evidence="1">Peptidyl-prolyl cis-trans isomerase SurA</fullName>
        <shortName evidence="1">PPIase SurA</shortName>
        <ecNumber evidence="1">5.2.1.8</ecNumber>
    </alternativeName>
    <alternativeName>
        <fullName evidence="1">Rotamase SurA</fullName>
    </alternativeName>
</protein>